<gene>
    <name type="primary">FXYD2</name>
    <name type="synonym">ATP1C</name>
    <name type="synonym">ATP1G1</name>
</gene>
<keyword id="KW-0002">3D-structure</keyword>
<keyword id="KW-0406">Ion transport</keyword>
<keyword id="KW-0472">Membrane</keyword>
<keyword id="KW-0630">Potassium</keyword>
<keyword id="KW-0633">Potassium transport</keyword>
<keyword id="KW-1185">Reference proteome</keyword>
<keyword id="KW-0915">Sodium</keyword>
<keyword id="KW-0739">Sodium transport</keyword>
<keyword id="KW-0740">Sodium/potassium transport</keyword>
<keyword id="KW-0812">Transmembrane</keyword>
<keyword id="KW-1133">Transmembrane helix</keyword>
<keyword id="KW-0813">Transport</keyword>
<evidence type="ECO:0000250" key="1">
    <source>
        <dbReference type="UniProtKB" id="O13001"/>
    </source>
</evidence>
<evidence type="ECO:0000255" key="2"/>
<evidence type="ECO:0000305" key="3"/>
<dbReference type="EMBL" id="X70059">
    <property type="protein sequence ID" value="CAA49663.1"/>
    <property type="molecule type" value="mRNA"/>
</dbReference>
<dbReference type="PIR" id="D46435">
    <property type="entry name" value="D46435"/>
</dbReference>
<dbReference type="PDB" id="4XE5">
    <property type="method" value="X-ray"/>
    <property type="resolution" value="3.90 A"/>
    <property type="chains" value="G=1-58"/>
</dbReference>
<dbReference type="PDBsum" id="4XE5"/>
<dbReference type="SMR" id="Q04645"/>
<dbReference type="FunCoup" id="Q04645">
    <property type="interactions" value="10"/>
</dbReference>
<dbReference type="STRING" id="9913.ENSBTAP00000073362"/>
<dbReference type="PaxDb" id="9913-ENSBTAP00000012957"/>
<dbReference type="eggNOG" id="ENOG502SGMI">
    <property type="taxonomic scope" value="Eukaryota"/>
</dbReference>
<dbReference type="InParanoid" id="Q04645"/>
<dbReference type="OrthoDB" id="8430468at2759"/>
<dbReference type="BRENDA" id="7.2.2.13">
    <property type="organism ID" value="908"/>
</dbReference>
<dbReference type="Proteomes" id="UP000009136">
    <property type="component" value="Unplaced"/>
</dbReference>
<dbReference type="GO" id="GO:0016020">
    <property type="term" value="C:membrane"/>
    <property type="evidence" value="ECO:0007669"/>
    <property type="project" value="UniProtKB-SubCell"/>
</dbReference>
<dbReference type="GO" id="GO:0017080">
    <property type="term" value="F:sodium channel regulator activity"/>
    <property type="evidence" value="ECO:0000318"/>
    <property type="project" value="GO_Central"/>
</dbReference>
<dbReference type="GO" id="GO:1903278">
    <property type="term" value="P:positive regulation of sodium ion export across plasma membrane"/>
    <property type="evidence" value="ECO:0000318"/>
    <property type="project" value="GO_Central"/>
</dbReference>
<dbReference type="GO" id="GO:0006813">
    <property type="term" value="P:potassium ion transport"/>
    <property type="evidence" value="ECO:0007669"/>
    <property type="project" value="UniProtKB-KW"/>
</dbReference>
<dbReference type="GO" id="GO:0006814">
    <property type="term" value="P:sodium ion transport"/>
    <property type="evidence" value="ECO:0007669"/>
    <property type="project" value="UniProtKB-KW"/>
</dbReference>
<dbReference type="CDD" id="cd20318">
    <property type="entry name" value="FXYD2"/>
    <property type="match status" value="1"/>
</dbReference>
<dbReference type="FunFam" id="1.20.5.780:FF:000004">
    <property type="entry name" value="FXYD domain-containing ion transport regulator"/>
    <property type="match status" value="1"/>
</dbReference>
<dbReference type="Gene3D" id="1.20.5.780">
    <property type="entry name" value="Single helix bin"/>
    <property type="match status" value="1"/>
</dbReference>
<dbReference type="InterPro" id="IPR047282">
    <property type="entry name" value="ATNG"/>
</dbReference>
<dbReference type="InterPro" id="IPR047297">
    <property type="entry name" value="FXYD_motif"/>
</dbReference>
<dbReference type="InterPro" id="IPR000272">
    <property type="entry name" value="Ion-transport_regulator_FXYD"/>
</dbReference>
<dbReference type="PANTHER" id="PTHR14132">
    <property type="entry name" value="SODIUM/POTASSIUM-TRANSPORTING ATPASE SUBUNIT GAMMA"/>
    <property type="match status" value="1"/>
</dbReference>
<dbReference type="PANTHER" id="PTHR14132:SF3">
    <property type="entry name" value="SODIUM_POTASSIUM-TRANSPORTING ATPASE SUBUNIT GAMMA"/>
    <property type="match status" value="1"/>
</dbReference>
<dbReference type="Pfam" id="PF02038">
    <property type="entry name" value="ATP1G1_PLM_MAT8"/>
    <property type="match status" value="1"/>
</dbReference>
<dbReference type="PROSITE" id="PS01310">
    <property type="entry name" value="FXYD"/>
    <property type="match status" value="1"/>
</dbReference>
<reference key="1">
    <citation type="journal article" date="1993" name="J. Cell Biol.">
        <title>Molecular cloning and immunological characterization of the gamma polypeptide, a small protein associated with the Na,K-ATPase.</title>
        <authorList>
            <person name="Mercer R.W."/>
            <person name="Biemesderfer D."/>
            <person name="Bliss D.P. Jr."/>
            <person name="Collins J.H."/>
            <person name="Forbush B. III"/>
        </authorList>
    </citation>
    <scope>NUCLEOTIDE SEQUENCE [MRNA]</scope>
    <source>
        <tissue>Kidney</tissue>
    </source>
</reference>
<comment type="function">
    <text>May be involved in forming the receptor site for cardiac glycoside binding or may modulate the transport function of the sodium ATPase.</text>
</comment>
<comment type="subunit">
    <text evidence="1">Regulatory subunit of the sodium/potassium-transporting ATPase which is composed of a catalytic alpha subunit, an auxiliary non-catalytic beta subunit and an additional regulatory subunit.</text>
</comment>
<comment type="subcellular location">
    <subcellularLocation>
        <location evidence="3">Membrane</location>
        <topology evidence="3">Single-pass type III membrane protein</topology>
    </subcellularLocation>
</comment>
<comment type="tissue specificity">
    <text>Highest levels expressed in the kidney and spleen. Restricted to the basolateral membrane in renal epithelial cells and varies in its level of expression along the nephron.</text>
</comment>
<comment type="similarity">
    <text evidence="3">Belongs to the FXYD family.</text>
</comment>
<feature type="chain" id="PRO_0000148184" description="Sodium/potassium-transporting ATPase subunit gamma">
    <location>
        <begin position="1"/>
        <end position="58"/>
    </location>
</feature>
<feature type="transmembrane region" description="Helical" evidence="2">
    <location>
        <begin position="20"/>
        <end position="39"/>
    </location>
</feature>
<protein>
    <recommendedName>
        <fullName>Sodium/potassium-transporting ATPase subunit gamma</fullName>
        <shortName>Na(+)/K(+) ATPase subunit gamma</shortName>
    </recommendedName>
    <alternativeName>
        <fullName>FXYD domain-containing ion transport regulator 2</fullName>
    </alternativeName>
    <alternativeName>
        <fullName>Sodium pump gamma chain</fullName>
    </alternativeName>
</protein>
<accession>Q04645</accession>
<organism>
    <name type="scientific">Bos taurus</name>
    <name type="common">Bovine</name>
    <dbReference type="NCBI Taxonomy" id="9913"/>
    <lineage>
        <taxon>Eukaryota</taxon>
        <taxon>Metazoa</taxon>
        <taxon>Chordata</taxon>
        <taxon>Craniata</taxon>
        <taxon>Vertebrata</taxon>
        <taxon>Euteleostomi</taxon>
        <taxon>Mammalia</taxon>
        <taxon>Eutheria</taxon>
        <taxon>Laurasiatheria</taxon>
        <taxon>Artiodactyla</taxon>
        <taxon>Ruminantia</taxon>
        <taxon>Pecora</taxon>
        <taxon>Bovidae</taxon>
        <taxon>Bovinae</taxon>
        <taxon>Bos</taxon>
    </lineage>
</organism>
<sequence>MVAVQGTEDPFYYDYETVRNGGLIFAALAFIVGLVIILSKRFRCGAKRQHRQIPEDGL</sequence>
<proteinExistence type="evidence at protein level"/>
<name>ATNG_BOVIN</name>